<comment type="function">
    <text evidence="1">Binds 16S rRNA, required for the assembly of 30S particles.</text>
</comment>
<comment type="subunit">
    <text evidence="1">Part of the 30S ribosomal subunit.</text>
</comment>
<comment type="subcellular location">
    <subcellularLocation>
        <location>Plastid</location>
        <location>Chloroplast</location>
    </subcellularLocation>
</comment>
<comment type="similarity">
    <text evidence="1">Belongs to the universal ribosomal protein uS14 family.</text>
</comment>
<proteinExistence type="inferred from homology"/>
<accession>Q09G48</accession>
<reference key="1">
    <citation type="journal article" date="2006" name="BMC Plant Biol.">
        <title>Rapid and accurate pyrosequencing of angiosperm plastid genomes.</title>
        <authorList>
            <person name="Moore M.J."/>
            <person name="Dhingra A."/>
            <person name="Soltis P.S."/>
            <person name="Shaw R."/>
            <person name="Farmerie W.G."/>
            <person name="Folta K.M."/>
            <person name="Soltis D.E."/>
        </authorList>
    </citation>
    <scope>NUCLEOTIDE SEQUENCE [LARGE SCALE GENOMIC DNA]</scope>
</reference>
<gene>
    <name evidence="1" type="primary">rps14</name>
</gene>
<geneLocation type="chloroplast"/>
<keyword id="KW-0150">Chloroplast</keyword>
<keyword id="KW-0934">Plastid</keyword>
<keyword id="KW-0687">Ribonucleoprotein</keyword>
<keyword id="KW-0689">Ribosomal protein</keyword>
<keyword id="KW-0694">RNA-binding</keyword>
<keyword id="KW-0699">rRNA-binding</keyword>
<organism>
    <name type="scientific">Platanus occidentalis</name>
    <name type="common">Sycamore</name>
    <name type="synonym">American plane tree</name>
    <dbReference type="NCBI Taxonomy" id="4403"/>
    <lineage>
        <taxon>Eukaryota</taxon>
        <taxon>Viridiplantae</taxon>
        <taxon>Streptophyta</taxon>
        <taxon>Embryophyta</taxon>
        <taxon>Tracheophyta</taxon>
        <taxon>Spermatophyta</taxon>
        <taxon>Magnoliopsida</taxon>
        <taxon>Proteales</taxon>
        <taxon>Platanaceae</taxon>
        <taxon>Platanus</taxon>
    </lineage>
</organism>
<protein>
    <recommendedName>
        <fullName evidence="1">Small ribosomal subunit protein uS14c</fullName>
    </recommendedName>
    <alternativeName>
        <fullName evidence="2">30S ribosomal protein S14, chloroplastic</fullName>
    </alternativeName>
</protein>
<evidence type="ECO:0000255" key="1">
    <source>
        <dbReference type="HAMAP-Rule" id="MF_00537"/>
    </source>
</evidence>
<evidence type="ECO:0000305" key="2"/>
<name>RR14_PLAOC</name>
<dbReference type="EMBL" id="DQ923116">
    <property type="protein sequence ID" value="ABI49776.1"/>
    <property type="molecule type" value="Genomic_DNA"/>
</dbReference>
<dbReference type="RefSeq" id="YP_740563.1">
    <property type="nucleotide sequence ID" value="NC_008335.1"/>
</dbReference>
<dbReference type="SMR" id="Q09G48"/>
<dbReference type="GeneID" id="4271264"/>
<dbReference type="GO" id="GO:0009507">
    <property type="term" value="C:chloroplast"/>
    <property type="evidence" value="ECO:0007669"/>
    <property type="project" value="UniProtKB-SubCell"/>
</dbReference>
<dbReference type="GO" id="GO:0015935">
    <property type="term" value="C:small ribosomal subunit"/>
    <property type="evidence" value="ECO:0007669"/>
    <property type="project" value="TreeGrafter"/>
</dbReference>
<dbReference type="GO" id="GO:0019843">
    <property type="term" value="F:rRNA binding"/>
    <property type="evidence" value="ECO:0007669"/>
    <property type="project" value="UniProtKB-UniRule"/>
</dbReference>
<dbReference type="GO" id="GO:0003735">
    <property type="term" value="F:structural constituent of ribosome"/>
    <property type="evidence" value="ECO:0007669"/>
    <property type="project" value="InterPro"/>
</dbReference>
<dbReference type="GO" id="GO:0006412">
    <property type="term" value="P:translation"/>
    <property type="evidence" value="ECO:0007669"/>
    <property type="project" value="UniProtKB-UniRule"/>
</dbReference>
<dbReference type="FunFam" id="1.10.287.1480:FF:000001">
    <property type="entry name" value="30S ribosomal protein S14"/>
    <property type="match status" value="1"/>
</dbReference>
<dbReference type="Gene3D" id="1.10.287.1480">
    <property type="match status" value="1"/>
</dbReference>
<dbReference type="HAMAP" id="MF_00537">
    <property type="entry name" value="Ribosomal_uS14_1"/>
    <property type="match status" value="1"/>
</dbReference>
<dbReference type="InterPro" id="IPR001209">
    <property type="entry name" value="Ribosomal_uS14"/>
</dbReference>
<dbReference type="InterPro" id="IPR023036">
    <property type="entry name" value="Ribosomal_uS14_bac/plastid"/>
</dbReference>
<dbReference type="InterPro" id="IPR018271">
    <property type="entry name" value="Ribosomal_uS14_CS"/>
</dbReference>
<dbReference type="NCBIfam" id="NF006477">
    <property type="entry name" value="PRK08881.1"/>
    <property type="match status" value="1"/>
</dbReference>
<dbReference type="PANTHER" id="PTHR19836">
    <property type="entry name" value="30S RIBOSOMAL PROTEIN S14"/>
    <property type="match status" value="1"/>
</dbReference>
<dbReference type="PANTHER" id="PTHR19836:SF19">
    <property type="entry name" value="SMALL RIBOSOMAL SUBUNIT PROTEIN US14M"/>
    <property type="match status" value="1"/>
</dbReference>
<dbReference type="Pfam" id="PF00253">
    <property type="entry name" value="Ribosomal_S14"/>
    <property type="match status" value="1"/>
</dbReference>
<dbReference type="SUPFAM" id="SSF57716">
    <property type="entry name" value="Glucocorticoid receptor-like (DNA-binding domain)"/>
    <property type="match status" value="1"/>
</dbReference>
<dbReference type="PROSITE" id="PS00527">
    <property type="entry name" value="RIBOSOMAL_S14"/>
    <property type="match status" value="1"/>
</dbReference>
<feature type="chain" id="PRO_0000354436" description="Small ribosomal subunit protein uS14c">
    <location>
        <begin position="1"/>
        <end position="100"/>
    </location>
</feature>
<sequence length="100" mass="11636">MAKKSLIQREKKRQKLEQKYHLIRRSSKKEISKIPSLSGKWEIHGKLQSLPRNSAATRLHRRCFSTGRPRANYRDFGLSGHILREMVHACLLPGATRSSW</sequence>